<evidence type="ECO:0000255" key="1">
    <source>
        <dbReference type="HAMAP-Rule" id="MF_00165"/>
    </source>
</evidence>
<comment type="function">
    <text evidence="1">Phosphorylation of dTMP to form dTDP in both de novo and salvage pathways of dTTP synthesis.</text>
</comment>
<comment type="catalytic activity">
    <reaction evidence="1">
        <text>dTMP + ATP = dTDP + ADP</text>
        <dbReference type="Rhea" id="RHEA:13517"/>
        <dbReference type="ChEBI" id="CHEBI:30616"/>
        <dbReference type="ChEBI" id="CHEBI:58369"/>
        <dbReference type="ChEBI" id="CHEBI:63528"/>
        <dbReference type="ChEBI" id="CHEBI:456216"/>
        <dbReference type="EC" id="2.7.4.9"/>
    </reaction>
</comment>
<comment type="similarity">
    <text evidence="1">Belongs to the thymidylate kinase family.</text>
</comment>
<protein>
    <recommendedName>
        <fullName evidence="1">Thymidylate kinase</fullName>
        <ecNumber evidence="1">2.7.4.9</ecNumber>
    </recommendedName>
    <alternativeName>
        <fullName evidence="1">dTMP kinase</fullName>
    </alternativeName>
</protein>
<organism>
    <name type="scientific">Salmonella schwarzengrund (strain CVM19633)</name>
    <dbReference type="NCBI Taxonomy" id="439843"/>
    <lineage>
        <taxon>Bacteria</taxon>
        <taxon>Pseudomonadati</taxon>
        <taxon>Pseudomonadota</taxon>
        <taxon>Gammaproteobacteria</taxon>
        <taxon>Enterobacterales</taxon>
        <taxon>Enterobacteriaceae</taxon>
        <taxon>Salmonella</taxon>
    </lineage>
</organism>
<feature type="chain" id="PRO_1000097429" description="Thymidylate kinase">
    <location>
        <begin position="1"/>
        <end position="213"/>
    </location>
</feature>
<feature type="binding site" evidence="1">
    <location>
        <begin position="10"/>
        <end position="17"/>
    </location>
    <ligand>
        <name>ATP</name>
        <dbReference type="ChEBI" id="CHEBI:30616"/>
    </ligand>
</feature>
<accession>B4TTH0</accession>
<sequence>MGSNYIVIEGLEGAGKTTARDVVVETLEQLGIRNMIFTREPGGTQLAEKLRSLVLDIRSVGDEVITDKAEVLMFYAARVQLVETVIKPALAQGVWVIGDRHDLSTQAYQGGGRGIDQTMLATLRDAVLGDFRPDLTLYLDVTPEVGLKRARARGDLDRIEQESFDFFNRTRARYLELAAQDSRIRTIDATQPLDAVMRDIRATVTKWVQEQAA</sequence>
<dbReference type="EC" id="2.7.4.9" evidence="1"/>
<dbReference type="EMBL" id="CP001127">
    <property type="protein sequence ID" value="ACF88635.1"/>
    <property type="molecule type" value="Genomic_DNA"/>
</dbReference>
<dbReference type="RefSeq" id="WP_000535399.1">
    <property type="nucleotide sequence ID" value="NC_011094.1"/>
</dbReference>
<dbReference type="SMR" id="B4TTH0"/>
<dbReference type="KEGG" id="sew:SeSA_A1276"/>
<dbReference type="HOGENOM" id="CLU_049131_0_1_6"/>
<dbReference type="Proteomes" id="UP000001865">
    <property type="component" value="Chromosome"/>
</dbReference>
<dbReference type="GO" id="GO:0005829">
    <property type="term" value="C:cytosol"/>
    <property type="evidence" value="ECO:0007669"/>
    <property type="project" value="TreeGrafter"/>
</dbReference>
<dbReference type="GO" id="GO:0005524">
    <property type="term" value="F:ATP binding"/>
    <property type="evidence" value="ECO:0007669"/>
    <property type="project" value="UniProtKB-UniRule"/>
</dbReference>
<dbReference type="GO" id="GO:0004798">
    <property type="term" value="F:dTMP kinase activity"/>
    <property type="evidence" value="ECO:0007669"/>
    <property type="project" value="UniProtKB-UniRule"/>
</dbReference>
<dbReference type="GO" id="GO:0006233">
    <property type="term" value="P:dTDP biosynthetic process"/>
    <property type="evidence" value="ECO:0007669"/>
    <property type="project" value="InterPro"/>
</dbReference>
<dbReference type="GO" id="GO:0006235">
    <property type="term" value="P:dTTP biosynthetic process"/>
    <property type="evidence" value="ECO:0007669"/>
    <property type="project" value="UniProtKB-UniRule"/>
</dbReference>
<dbReference type="GO" id="GO:0006227">
    <property type="term" value="P:dUDP biosynthetic process"/>
    <property type="evidence" value="ECO:0007669"/>
    <property type="project" value="TreeGrafter"/>
</dbReference>
<dbReference type="CDD" id="cd01672">
    <property type="entry name" value="TMPK"/>
    <property type="match status" value="1"/>
</dbReference>
<dbReference type="FunFam" id="3.40.50.300:FF:000321">
    <property type="entry name" value="Thymidylate kinase"/>
    <property type="match status" value="1"/>
</dbReference>
<dbReference type="Gene3D" id="3.40.50.300">
    <property type="entry name" value="P-loop containing nucleotide triphosphate hydrolases"/>
    <property type="match status" value="1"/>
</dbReference>
<dbReference type="HAMAP" id="MF_00165">
    <property type="entry name" value="Thymidylate_kinase"/>
    <property type="match status" value="1"/>
</dbReference>
<dbReference type="InterPro" id="IPR027417">
    <property type="entry name" value="P-loop_NTPase"/>
</dbReference>
<dbReference type="InterPro" id="IPR039430">
    <property type="entry name" value="Thymidylate_kin-like_dom"/>
</dbReference>
<dbReference type="InterPro" id="IPR018095">
    <property type="entry name" value="Thymidylate_kin_CS"/>
</dbReference>
<dbReference type="InterPro" id="IPR018094">
    <property type="entry name" value="Thymidylate_kinase"/>
</dbReference>
<dbReference type="NCBIfam" id="TIGR00041">
    <property type="entry name" value="DTMP_kinase"/>
    <property type="match status" value="1"/>
</dbReference>
<dbReference type="PANTHER" id="PTHR10344">
    <property type="entry name" value="THYMIDYLATE KINASE"/>
    <property type="match status" value="1"/>
</dbReference>
<dbReference type="PANTHER" id="PTHR10344:SF4">
    <property type="entry name" value="UMP-CMP KINASE 2, MITOCHONDRIAL"/>
    <property type="match status" value="1"/>
</dbReference>
<dbReference type="Pfam" id="PF02223">
    <property type="entry name" value="Thymidylate_kin"/>
    <property type="match status" value="1"/>
</dbReference>
<dbReference type="SUPFAM" id="SSF52540">
    <property type="entry name" value="P-loop containing nucleoside triphosphate hydrolases"/>
    <property type="match status" value="1"/>
</dbReference>
<dbReference type="PROSITE" id="PS01331">
    <property type="entry name" value="THYMIDYLATE_KINASE"/>
    <property type="match status" value="1"/>
</dbReference>
<name>KTHY_SALSV</name>
<keyword id="KW-0067">ATP-binding</keyword>
<keyword id="KW-0418">Kinase</keyword>
<keyword id="KW-0545">Nucleotide biosynthesis</keyword>
<keyword id="KW-0547">Nucleotide-binding</keyword>
<keyword id="KW-0808">Transferase</keyword>
<reference key="1">
    <citation type="journal article" date="2011" name="J. Bacteriol.">
        <title>Comparative genomics of 28 Salmonella enterica isolates: evidence for CRISPR-mediated adaptive sublineage evolution.</title>
        <authorList>
            <person name="Fricke W.F."/>
            <person name="Mammel M.K."/>
            <person name="McDermott P.F."/>
            <person name="Tartera C."/>
            <person name="White D.G."/>
            <person name="Leclerc J.E."/>
            <person name="Ravel J."/>
            <person name="Cebula T.A."/>
        </authorList>
    </citation>
    <scope>NUCLEOTIDE SEQUENCE [LARGE SCALE GENOMIC DNA]</scope>
    <source>
        <strain>CVM19633</strain>
    </source>
</reference>
<proteinExistence type="inferred from homology"/>
<gene>
    <name evidence="1" type="primary">tmk</name>
    <name type="ordered locus">SeSA_A1276</name>
</gene>